<gene>
    <name evidence="1" type="primary">maeA</name>
    <name type="ordered locus">Shewana3_0750</name>
</gene>
<evidence type="ECO:0000255" key="1">
    <source>
        <dbReference type="HAMAP-Rule" id="MF_01619"/>
    </source>
</evidence>
<proteinExistence type="inferred from homology"/>
<reference key="1">
    <citation type="submission" date="2006-09" db="EMBL/GenBank/DDBJ databases">
        <title>Complete sequence of chromosome 1 of Shewanella sp. ANA-3.</title>
        <authorList>
            <person name="Copeland A."/>
            <person name="Lucas S."/>
            <person name="Lapidus A."/>
            <person name="Barry K."/>
            <person name="Detter J.C."/>
            <person name="Glavina del Rio T."/>
            <person name="Hammon N."/>
            <person name="Israni S."/>
            <person name="Dalin E."/>
            <person name="Tice H."/>
            <person name="Pitluck S."/>
            <person name="Chertkov O."/>
            <person name="Brettin T."/>
            <person name="Bruce D."/>
            <person name="Han C."/>
            <person name="Tapia R."/>
            <person name="Gilna P."/>
            <person name="Schmutz J."/>
            <person name="Larimer F."/>
            <person name="Land M."/>
            <person name="Hauser L."/>
            <person name="Kyrpides N."/>
            <person name="Kim E."/>
            <person name="Newman D."/>
            <person name="Salticov C."/>
            <person name="Konstantinidis K."/>
            <person name="Klappenback J."/>
            <person name="Tiedje J."/>
            <person name="Richardson P."/>
        </authorList>
    </citation>
    <scope>NUCLEOTIDE SEQUENCE [LARGE SCALE GENOMIC DNA]</scope>
    <source>
        <strain>ANA-3</strain>
    </source>
</reference>
<accession>A0KT69</accession>
<dbReference type="EC" id="1.1.1.38" evidence="1"/>
<dbReference type="EMBL" id="CP000469">
    <property type="protein sequence ID" value="ABK46988.1"/>
    <property type="molecule type" value="Genomic_DNA"/>
</dbReference>
<dbReference type="RefSeq" id="WP_011715908.1">
    <property type="nucleotide sequence ID" value="NC_008577.1"/>
</dbReference>
<dbReference type="SMR" id="A0KT69"/>
<dbReference type="STRING" id="94122.Shewana3_0750"/>
<dbReference type="KEGG" id="shn:Shewana3_0750"/>
<dbReference type="eggNOG" id="COG0281">
    <property type="taxonomic scope" value="Bacteria"/>
</dbReference>
<dbReference type="HOGENOM" id="CLU_011405_5_2_6"/>
<dbReference type="OrthoDB" id="3314528at2"/>
<dbReference type="Proteomes" id="UP000002589">
    <property type="component" value="Chromosome"/>
</dbReference>
<dbReference type="GO" id="GO:0005829">
    <property type="term" value="C:cytosol"/>
    <property type="evidence" value="ECO:0007669"/>
    <property type="project" value="TreeGrafter"/>
</dbReference>
<dbReference type="GO" id="GO:0004471">
    <property type="term" value="F:malate dehydrogenase (decarboxylating) (NAD+) activity"/>
    <property type="evidence" value="ECO:0007669"/>
    <property type="project" value="UniProtKB-UniRule"/>
</dbReference>
<dbReference type="GO" id="GO:0046872">
    <property type="term" value="F:metal ion binding"/>
    <property type="evidence" value="ECO:0007669"/>
    <property type="project" value="UniProtKB-KW"/>
</dbReference>
<dbReference type="GO" id="GO:0051287">
    <property type="term" value="F:NAD binding"/>
    <property type="evidence" value="ECO:0007669"/>
    <property type="project" value="InterPro"/>
</dbReference>
<dbReference type="GO" id="GO:0008948">
    <property type="term" value="F:oxaloacetate decarboxylase activity"/>
    <property type="evidence" value="ECO:0007669"/>
    <property type="project" value="UniProtKB-UniRule"/>
</dbReference>
<dbReference type="GO" id="GO:0006108">
    <property type="term" value="P:malate metabolic process"/>
    <property type="evidence" value="ECO:0007669"/>
    <property type="project" value="TreeGrafter"/>
</dbReference>
<dbReference type="CDD" id="cd05312">
    <property type="entry name" value="NAD_bind_1_malic_enz"/>
    <property type="match status" value="1"/>
</dbReference>
<dbReference type="FunFam" id="3.40.50.10380:FF:000001">
    <property type="entry name" value="NAD-dependent malic enzyme"/>
    <property type="match status" value="1"/>
</dbReference>
<dbReference type="FunFam" id="3.40.50.720:FF:000055">
    <property type="entry name" value="NAD-dependent malic enzyme"/>
    <property type="match status" value="1"/>
</dbReference>
<dbReference type="Gene3D" id="3.40.50.10380">
    <property type="entry name" value="Malic enzyme, N-terminal domain"/>
    <property type="match status" value="1"/>
</dbReference>
<dbReference type="Gene3D" id="3.40.50.720">
    <property type="entry name" value="NAD(P)-binding Rossmann-like Domain"/>
    <property type="match status" value="1"/>
</dbReference>
<dbReference type="HAMAP" id="MF_01619">
    <property type="entry name" value="NAD_malic_enz"/>
    <property type="match status" value="1"/>
</dbReference>
<dbReference type="InterPro" id="IPR046346">
    <property type="entry name" value="Aminoacid_DH-like_N_sf"/>
</dbReference>
<dbReference type="InterPro" id="IPR015884">
    <property type="entry name" value="Malic_enzyme_CS"/>
</dbReference>
<dbReference type="InterPro" id="IPR012301">
    <property type="entry name" value="Malic_N_dom"/>
</dbReference>
<dbReference type="InterPro" id="IPR037062">
    <property type="entry name" value="Malic_N_dom_sf"/>
</dbReference>
<dbReference type="InterPro" id="IPR012302">
    <property type="entry name" value="Malic_NAD-bd"/>
</dbReference>
<dbReference type="InterPro" id="IPR001891">
    <property type="entry name" value="Malic_OxRdtase"/>
</dbReference>
<dbReference type="InterPro" id="IPR036291">
    <property type="entry name" value="NAD(P)-bd_dom_sf"/>
</dbReference>
<dbReference type="InterPro" id="IPR023667">
    <property type="entry name" value="NAD_malic_enz_proteobac"/>
</dbReference>
<dbReference type="NCBIfam" id="NF010052">
    <property type="entry name" value="PRK13529.1"/>
    <property type="match status" value="1"/>
</dbReference>
<dbReference type="PANTHER" id="PTHR23406">
    <property type="entry name" value="MALIC ENZYME-RELATED"/>
    <property type="match status" value="1"/>
</dbReference>
<dbReference type="PANTHER" id="PTHR23406:SF34">
    <property type="entry name" value="NAD-DEPENDENT MALIC ENZYME, MITOCHONDRIAL"/>
    <property type="match status" value="1"/>
</dbReference>
<dbReference type="Pfam" id="PF00390">
    <property type="entry name" value="malic"/>
    <property type="match status" value="1"/>
</dbReference>
<dbReference type="Pfam" id="PF03949">
    <property type="entry name" value="Malic_M"/>
    <property type="match status" value="1"/>
</dbReference>
<dbReference type="PIRSF" id="PIRSF000106">
    <property type="entry name" value="ME"/>
    <property type="match status" value="1"/>
</dbReference>
<dbReference type="PRINTS" id="PR00072">
    <property type="entry name" value="MALOXRDTASE"/>
</dbReference>
<dbReference type="SMART" id="SM01274">
    <property type="entry name" value="malic"/>
    <property type="match status" value="1"/>
</dbReference>
<dbReference type="SMART" id="SM00919">
    <property type="entry name" value="Malic_M"/>
    <property type="match status" value="1"/>
</dbReference>
<dbReference type="SUPFAM" id="SSF53223">
    <property type="entry name" value="Aminoacid dehydrogenase-like, N-terminal domain"/>
    <property type="match status" value="1"/>
</dbReference>
<dbReference type="SUPFAM" id="SSF51735">
    <property type="entry name" value="NAD(P)-binding Rossmann-fold domains"/>
    <property type="match status" value="1"/>
</dbReference>
<dbReference type="PROSITE" id="PS00331">
    <property type="entry name" value="MALIC_ENZYMES"/>
    <property type="match status" value="1"/>
</dbReference>
<protein>
    <recommendedName>
        <fullName evidence="1">NAD-dependent malic enzyme</fullName>
        <shortName evidence="1">NAD-ME</shortName>
        <ecNumber evidence="1">1.1.1.38</ecNumber>
    </recommendedName>
</protein>
<comment type="catalytic activity">
    <reaction evidence="1">
        <text>(S)-malate + NAD(+) = pyruvate + CO2 + NADH</text>
        <dbReference type="Rhea" id="RHEA:12653"/>
        <dbReference type="ChEBI" id="CHEBI:15361"/>
        <dbReference type="ChEBI" id="CHEBI:15589"/>
        <dbReference type="ChEBI" id="CHEBI:16526"/>
        <dbReference type="ChEBI" id="CHEBI:57540"/>
        <dbReference type="ChEBI" id="CHEBI:57945"/>
        <dbReference type="EC" id="1.1.1.38"/>
    </reaction>
</comment>
<comment type="catalytic activity">
    <reaction evidence="1">
        <text>oxaloacetate + H(+) = pyruvate + CO2</text>
        <dbReference type="Rhea" id="RHEA:15641"/>
        <dbReference type="ChEBI" id="CHEBI:15361"/>
        <dbReference type="ChEBI" id="CHEBI:15378"/>
        <dbReference type="ChEBI" id="CHEBI:16452"/>
        <dbReference type="ChEBI" id="CHEBI:16526"/>
        <dbReference type="EC" id="1.1.1.38"/>
    </reaction>
</comment>
<comment type="cofactor">
    <cofactor evidence="1">
        <name>Mg(2+)</name>
        <dbReference type="ChEBI" id="CHEBI:18420"/>
    </cofactor>
    <cofactor evidence="1">
        <name>Mn(2+)</name>
        <dbReference type="ChEBI" id="CHEBI:29035"/>
    </cofactor>
    <text evidence="1">Divalent metal cations. Prefers magnesium or manganese.</text>
</comment>
<comment type="subunit">
    <text evidence="1">Homotetramer.</text>
</comment>
<comment type="similarity">
    <text evidence="1">Belongs to the malic enzymes family.</text>
</comment>
<keyword id="KW-0479">Metal-binding</keyword>
<keyword id="KW-0520">NAD</keyword>
<keyword id="KW-0560">Oxidoreductase</keyword>
<feature type="chain" id="PRO_1000069545" description="NAD-dependent malic enzyme">
    <location>
        <begin position="1"/>
        <end position="562"/>
    </location>
</feature>
<feature type="active site" description="Proton donor" evidence="1">
    <location>
        <position position="101"/>
    </location>
</feature>
<feature type="active site" description="Proton acceptor" evidence="1">
    <location>
        <position position="172"/>
    </location>
</feature>
<feature type="binding site" evidence="1">
    <location>
        <position position="154"/>
    </location>
    <ligand>
        <name>NAD(+)</name>
        <dbReference type="ChEBI" id="CHEBI:57540"/>
    </ligand>
</feature>
<feature type="binding site" evidence="1">
    <location>
        <position position="243"/>
    </location>
    <ligand>
        <name>a divalent metal cation</name>
        <dbReference type="ChEBI" id="CHEBI:60240"/>
    </ligand>
</feature>
<feature type="binding site" evidence="1">
    <location>
        <position position="244"/>
    </location>
    <ligand>
        <name>a divalent metal cation</name>
        <dbReference type="ChEBI" id="CHEBI:60240"/>
    </ligand>
</feature>
<feature type="binding site" evidence="1">
    <location>
        <position position="267"/>
    </location>
    <ligand>
        <name>a divalent metal cation</name>
        <dbReference type="ChEBI" id="CHEBI:60240"/>
    </ligand>
</feature>
<feature type="binding site" evidence="1">
    <location>
        <position position="267"/>
    </location>
    <ligand>
        <name>NAD(+)</name>
        <dbReference type="ChEBI" id="CHEBI:57540"/>
    </ligand>
</feature>
<feature type="binding site" evidence="1">
    <location>
        <position position="415"/>
    </location>
    <ligand>
        <name>NAD(+)</name>
        <dbReference type="ChEBI" id="CHEBI:57540"/>
    </ligand>
</feature>
<feature type="site" description="Important for activity" evidence="1">
    <location>
        <position position="267"/>
    </location>
</feature>
<name>MAO1_SHESA</name>
<organism>
    <name type="scientific">Shewanella sp. (strain ANA-3)</name>
    <dbReference type="NCBI Taxonomy" id="94122"/>
    <lineage>
        <taxon>Bacteria</taxon>
        <taxon>Pseudomonadati</taxon>
        <taxon>Pseudomonadota</taxon>
        <taxon>Gammaproteobacteria</taxon>
        <taxon>Alteromonadales</taxon>
        <taxon>Shewanellaceae</taxon>
        <taxon>Shewanella</taxon>
    </lineage>
</organism>
<sequence length="562" mass="62187">MDDNKRPLYLPFAGPAILEAPLINKGSAFSEEERIFFNLEGLVPYAIETIEEQASRAYDQFRSFNNDLDKHIYLRNIQDTNETLFYRLVQNHISEMMPIIYTPTVGLACERFSKNYRRNRGLFISYPNKDRIDDILNNSTRQKVKIIVVTDGERILGLGDQGIGGMGIPIGKLSLYTSCGGISPAYTLPITLDVGTDNPQLLEDPMYMGWRHPRIGGEEYAEFIEAFMQAVHVRWPDTLIQFEDFAQKNAMPILERYKDRYCCFNDDIQGTAAVTVGSLLAACKAAGTELNKQRIAFLGAGSAGCGIAEAIVAQMVSEGISDEQARSQVCMVDRWGLLLDNMPNLLPFQQKLAQKCADICNWNNFSDNISLLDVVNNAKPTVLIGVSGAPGLFTEEIVRAMHSHCERPIIFPLSNPTSRVEATPKDILHWTSGQALVATGSPFEPVVVDGETYEIAQCNNSFIFPGIGLGVLASGARHVSDAMLMASSRALAECSPLAINGSGPLLPKLEDIHSVSKHIAFAVGKVAIEQGLSLPASDELLMQSIEDNFWKPEYRRYKRTSF</sequence>